<feature type="chain" id="PRO_1000213371" description="3-isopropylmalate dehydratase small subunit">
    <location>
        <begin position="1"/>
        <end position="165"/>
    </location>
</feature>
<sequence length="165" mass="18018">MIIEGPVIKFGDKIDTDIIIPARYLKYTDPQYLAQHAMEPLDPEFYKKASKGVIIVAGKVFGMGSSREQAAIALKAAGVKAVVAESFARIFYRNAINNGLPVITLPNSTKEIDENSYVKIDVETGEILVGNKVLKGKGITGMALEILQAGGIMEYLKKMQTVNRN</sequence>
<keyword id="KW-0028">Amino-acid biosynthesis</keyword>
<keyword id="KW-0100">Branched-chain amino acid biosynthesis</keyword>
<keyword id="KW-0432">Leucine biosynthesis</keyword>
<keyword id="KW-0456">Lyase</keyword>
<comment type="function">
    <text evidence="1">Catalyzes the isomerization between 2-isopropylmalate and 3-isopropylmalate, via the formation of 2-isopropylmaleate.</text>
</comment>
<comment type="catalytic activity">
    <reaction evidence="1">
        <text>(2R,3S)-3-isopropylmalate = (2S)-2-isopropylmalate</text>
        <dbReference type="Rhea" id="RHEA:32287"/>
        <dbReference type="ChEBI" id="CHEBI:1178"/>
        <dbReference type="ChEBI" id="CHEBI:35121"/>
        <dbReference type="EC" id="4.2.1.33"/>
    </reaction>
</comment>
<comment type="pathway">
    <text evidence="1">Amino-acid biosynthesis; L-leucine biosynthesis; L-leucine from 3-methyl-2-oxobutanoate: step 2/4.</text>
</comment>
<comment type="subunit">
    <text evidence="1">Heterodimer of LeuC and LeuD.</text>
</comment>
<comment type="similarity">
    <text evidence="1">Belongs to the LeuD family. LeuD type 2 subfamily.</text>
</comment>
<proteinExistence type="inferred from homology"/>
<name>LEUD_SACI4</name>
<evidence type="ECO:0000255" key="1">
    <source>
        <dbReference type="HAMAP-Rule" id="MF_01032"/>
    </source>
</evidence>
<organism>
    <name type="scientific">Saccharolobus islandicus (strain M.14.25 / Kamchatka #1)</name>
    <name type="common">Sulfolobus islandicus</name>
    <dbReference type="NCBI Taxonomy" id="427317"/>
    <lineage>
        <taxon>Archaea</taxon>
        <taxon>Thermoproteota</taxon>
        <taxon>Thermoprotei</taxon>
        <taxon>Sulfolobales</taxon>
        <taxon>Sulfolobaceae</taxon>
        <taxon>Saccharolobus</taxon>
    </lineage>
</organism>
<gene>
    <name evidence="1" type="primary">leuD</name>
    <name type="ordered locus">M1425_0258</name>
</gene>
<protein>
    <recommendedName>
        <fullName evidence="1">3-isopropylmalate dehydratase small subunit</fullName>
        <ecNumber evidence="1">4.2.1.33</ecNumber>
    </recommendedName>
    <alternativeName>
        <fullName evidence="1">Alpha-IPM isomerase</fullName>
        <shortName evidence="1">IPMI</shortName>
    </alternativeName>
    <alternativeName>
        <fullName evidence="1">Isopropylmalate isomerase</fullName>
    </alternativeName>
</protein>
<dbReference type="EC" id="4.2.1.33" evidence="1"/>
<dbReference type="EMBL" id="CP001400">
    <property type="protein sequence ID" value="ACP37148.1"/>
    <property type="molecule type" value="Genomic_DNA"/>
</dbReference>
<dbReference type="RefSeq" id="WP_012710429.1">
    <property type="nucleotide sequence ID" value="NC_012588.1"/>
</dbReference>
<dbReference type="SMR" id="C3MUB4"/>
<dbReference type="KEGG" id="sia:M1425_0258"/>
<dbReference type="HOGENOM" id="CLU_081378_1_1_2"/>
<dbReference type="UniPathway" id="UPA00048">
    <property type="reaction ID" value="UER00071"/>
</dbReference>
<dbReference type="Proteomes" id="UP000001350">
    <property type="component" value="Chromosome"/>
</dbReference>
<dbReference type="GO" id="GO:0003861">
    <property type="term" value="F:3-isopropylmalate dehydratase activity"/>
    <property type="evidence" value="ECO:0007669"/>
    <property type="project" value="UniProtKB-UniRule"/>
</dbReference>
<dbReference type="GO" id="GO:0009098">
    <property type="term" value="P:L-leucine biosynthetic process"/>
    <property type="evidence" value="ECO:0007669"/>
    <property type="project" value="UniProtKB-UniRule"/>
</dbReference>
<dbReference type="CDD" id="cd01577">
    <property type="entry name" value="IPMI_Swivel"/>
    <property type="match status" value="1"/>
</dbReference>
<dbReference type="Gene3D" id="3.20.19.10">
    <property type="entry name" value="Aconitase, domain 4"/>
    <property type="match status" value="1"/>
</dbReference>
<dbReference type="HAMAP" id="MF_01032">
    <property type="entry name" value="LeuD_type2"/>
    <property type="match status" value="1"/>
</dbReference>
<dbReference type="InterPro" id="IPR015928">
    <property type="entry name" value="Aconitase/3IPM_dehydase_swvl"/>
</dbReference>
<dbReference type="InterPro" id="IPR000573">
    <property type="entry name" value="AconitaseA/IPMdHydase_ssu_swvl"/>
</dbReference>
<dbReference type="InterPro" id="IPR033940">
    <property type="entry name" value="IPMI_Swivel"/>
</dbReference>
<dbReference type="InterPro" id="IPR050075">
    <property type="entry name" value="LeuD"/>
</dbReference>
<dbReference type="InterPro" id="IPR011827">
    <property type="entry name" value="LeuD_type2/HacB/DmdB"/>
</dbReference>
<dbReference type="NCBIfam" id="TIGR02087">
    <property type="entry name" value="LEUD_arch"/>
    <property type="match status" value="1"/>
</dbReference>
<dbReference type="PANTHER" id="PTHR43345:SF2">
    <property type="entry name" value="3-ISOPROPYLMALATE DEHYDRATASE SMALL SUBUNIT 1"/>
    <property type="match status" value="1"/>
</dbReference>
<dbReference type="PANTHER" id="PTHR43345">
    <property type="entry name" value="3-ISOPROPYLMALATE DEHYDRATASE SMALL SUBUNIT 2-RELATED-RELATED"/>
    <property type="match status" value="1"/>
</dbReference>
<dbReference type="Pfam" id="PF00694">
    <property type="entry name" value="Aconitase_C"/>
    <property type="match status" value="1"/>
</dbReference>
<dbReference type="SUPFAM" id="SSF52016">
    <property type="entry name" value="LeuD/IlvD-like"/>
    <property type="match status" value="1"/>
</dbReference>
<reference key="1">
    <citation type="journal article" date="2009" name="Proc. Natl. Acad. Sci. U.S.A.">
        <title>Biogeography of the Sulfolobus islandicus pan-genome.</title>
        <authorList>
            <person name="Reno M.L."/>
            <person name="Held N.L."/>
            <person name="Fields C.J."/>
            <person name="Burke P.V."/>
            <person name="Whitaker R.J."/>
        </authorList>
    </citation>
    <scope>NUCLEOTIDE SEQUENCE [LARGE SCALE GENOMIC DNA]</scope>
    <source>
        <strain>M.14.25 / Kamchatka #1</strain>
    </source>
</reference>
<accession>C3MUB4</accession>